<gene>
    <name type="primary">Ttc8</name>
    <name type="synonym">Bbs8</name>
</gene>
<sequence length="515" mass="58440">MGSEMEPLLRAWSYFRRRKFQLCADLCTQMLEKSPYDQEPAPDLPVSQAAWILKARALTEMVYIDEIDVDQEGIAEMILDENAIAQVPRPGTSLKLPGTNQTGGPTQAVRPITQAGRPITGFLRPSTQSGRPGTMEQAIRTPRTAYTARPITSSSGRFVRLGTASMLTSPDGPFINLSRLNLTKYSQKPKLAKALFEYILHHENDVKMALDLASLSTEYSQYKDWWWKVQIGKCYYRLGMYREAEKQFKSALKQQEMVDTFLYLAKVYIILDQPVTALNLFKQGLDKFPGEVTLLCGIARIYEEMNNSSSAAEYYKEVLKQDNTHVEAIACIGSNHFYSDQPEVALRFYRRLLQMGVYNCQLFNNLGLCCFYAQQYDMTLTSFERALSLAENEEEAADVWYNLGHIAVGIGDTNLAHQCFRLALVHNNHHAEAYNNLAVLEMRKGHVEQARALLQTASSLAPHMYEPHFNFATVSDKIGDLQRSYVAAQKSEVAFPEHVDTQHLIKQLKQHFAML</sequence>
<dbReference type="EMBL" id="AK002597">
    <property type="protein sequence ID" value="BAB22218.1"/>
    <property type="molecule type" value="mRNA"/>
</dbReference>
<dbReference type="EMBL" id="AK081697">
    <property type="protein sequence ID" value="BAC38298.1"/>
    <property type="molecule type" value="mRNA"/>
</dbReference>
<dbReference type="EMBL" id="BC017523">
    <property type="protein sequence ID" value="AAH17523.1"/>
    <property type="molecule type" value="mRNA"/>
</dbReference>
<dbReference type="CCDS" id="CCDS26101.1">
    <molecule id="Q8VD72-2"/>
</dbReference>
<dbReference type="CCDS" id="CCDS26102.1">
    <molecule id="Q8VD72-1"/>
</dbReference>
<dbReference type="RefSeq" id="NP_083829.1">
    <molecule id="Q8VD72-2"/>
    <property type="nucleotide sequence ID" value="NM_029553.4"/>
</dbReference>
<dbReference type="RefSeq" id="NP_938053.1">
    <molecule id="Q8VD72-1"/>
    <property type="nucleotide sequence ID" value="NM_198311.2"/>
</dbReference>
<dbReference type="SMR" id="Q8VD72"/>
<dbReference type="BioGRID" id="218052">
    <property type="interactions" value="1"/>
</dbReference>
<dbReference type="ComplexPortal" id="CPX-1909">
    <property type="entry name" value="BBSome complex"/>
</dbReference>
<dbReference type="DIP" id="DIP-60354N"/>
<dbReference type="FunCoup" id="Q8VD72">
    <property type="interactions" value="371"/>
</dbReference>
<dbReference type="IntAct" id="Q8VD72">
    <property type="interactions" value="4"/>
</dbReference>
<dbReference type="STRING" id="10090.ENSMUSP00000078148"/>
<dbReference type="GlyGen" id="Q8VD72">
    <property type="glycosylation" value="1 site"/>
</dbReference>
<dbReference type="iPTMnet" id="Q8VD72"/>
<dbReference type="PhosphoSitePlus" id="Q8VD72"/>
<dbReference type="PaxDb" id="10090-ENSMUSP00000078148"/>
<dbReference type="ProteomicsDB" id="300158">
    <molecule id="Q8VD72-1"/>
</dbReference>
<dbReference type="ProteomicsDB" id="300159">
    <molecule id="Q8VD72-2"/>
</dbReference>
<dbReference type="Pumba" id="Q8VD72"/>
<dbReference type="Antibodypedia" id="141">
    <property type="antibodies" value="211 antibodies from 29 providers"/>
</dbReference>
<dbReference type="DNASU" id="76260"/>
<dbReference type="Ensembl" id="ENSMUST00000079146.13">
    <molecule id="Q8VD72-1"/>
    <property type="protein sequence ID" value="ENSMUSP00000078148.7"/>
    <property type="gene ID" value="ENSMUSG00000021013.17"/>
</dbReference>
<dbReference type="Ensembl" id="ENSMUST00000085109.10">
    <molecule id="Q8VD72-2"/>
    <property type="protein sequence ID" value="ENSMUSP00000082190.4"/>
    <property type="gene ID" value="ENSMUSG00000021013.17"/>
</dbReference>
<dbReference type="GeneID" id="76260"/>
<dbReference type="KEGG" id="mmu:76260"/>
<dbReference type="UCSC" id="uc007oro.2">
    <molecule id="Q8VD72-1"/>
    <property type="organism name" value="mouse"/>
</dbReference>
<dbReference type="UCSC" id="uc007orp.2">
    <molecule id="Q8VD72-2"/>
    <property type="organism name" value="mouse"/>
</dbReference>
<dbReference type="AGR" id="MGI:1923510"/>
<dbReference type="CTD" id="123016"/>
<dbReference type="MGI" id="MGI:1923510">
    <property type="gene designation" value="Ttc8"/>
</dbReference>
<dbReference type="VEuPathDB" id="HostDB:ENSMUSG00000021013"/>
<dbReference type="eggNOG" id="KOG1129">
    <property type="taxonomic scope" value="Eukaryota"/>
</dbReference>
<dbReference type="GeneTree" id="ENSGT00940000156816"/>
<dbReference type="HOGENOM" id="CLU_025029_0_0_1"/>
<dbReference type="InParanoid" id="Q8VD72"/>
<dbReference type="OMA" id="QMGVNSA"/>
<dbReference type="OrthoDB" id="421121at2759"/>
<dbReference type="PhylomeDB" id="Q8VD72"/>
<dbReference type="TreeFam" id="TF314892"/>
<dbReference type="Reactome" id="R-MMU-5620922">
    <property type="pathway name" value="BBSome-mediated cargo-targeting to cilium"/>
</dbReference>
<dbReference type="BioGRID-ORCS" id="76260">
    <property type="hits" value="2 hits in 78 CRISPR screens"/>
</dbReference>
<dbReference type="ChiTaRS" id="Ttc8">
    <property type="organism name" value="mouse"/>
</dbReference>
<dbReference type="PRO" id="PR:Q8VD72"/>
<dbReference type="Proteomes" id="UP000000589">
    <property type="component" value="Chromosome 12"/>
</dbReference>
<dbReference type="RNAct" id="Q8VD72">
    <property type="molecule type" value="protein"/>
</dbReference>
<dbReference type="Bgee" id="ENSMUSG00000021013">
    <property type="expression patterns" value="Expressed in retinal neural layer and 242 other cell types or tissues"/>
</dbReference>
<dbReference type="ExpressionAtlas" id="Q8VD72">
    <property type="expression patterns" value="baseline and differential"/>
</dbReference>
<dbReference type="GO" id="GO:0034464">
    <property type="term" value="C:BBSome"/>
    <property type="evidence" value="ECO:0000314"/>
    <property type="project" value="UniProtKB"/>
</dbReference>
<dbReference type="GO" id="GO:0034451">
    <property type="term" value="C:centriolar satellite"/>
    <property type="evidence" value="ECO:0007669"/>
    <property type="project" value="UniProtKB-SubCell"/>
</dbReference>
<dbReference type="GO" id="GO:0005814">
    <property type="term" value="C:centriole"/>
    <property type="evidence" value="ECO:0007669"/>
    <property type="project" value="UniProtKB-SubCell"/>
</dbReference>
<dbReference type="GO" id="GO:0036064">
    <property type="term" value="C:ciliary basal body"/>
    <property type="evidence" value="ECO:0000266"/>
    <property type="project" value="MGI"/>
</dbReference>
<dbReference type="GO" id="GO:0060170">
    <property type="term" value="C:ciliary membrane"/>
    <property type="evidence" value="ECO:0000266"/>
    <property type="project" value="ComplexPortal"/>
</dbReference>
<dbReference type="GO" id="GO:0005929">
    <property type="term" value="C:cilium"/>
    <property type="evidence" value="ECO:0000314"/>
    <property type="project" value="UniProtKB"/>
</dbReference>
<dbReference type="GO" id="GO:0005737">
    <property type="term" value="C:cytoplasm"/>
    <property type="evidence" value="ECO:0007669"/>
    <property type="project" value="UniProtKB-SubCell"/>
</dbReference>
<dbReference type="GO" id="GO:0001650">
    <property type="term" value="C:fibrillar center"/>
    <property type="evidence" value="ECO:0007669"/>
    <property type="project" value="Ensembl"/>
</dbReference>
<dbReference type="GO" id="GO:0016020">
    <property type="term" value="C:membrane"/>
    <property type="evidence" value="ECO:0000314"/>
    <property type="project" value="MGI"/>
</dbReference>
<dbReference type="GO" id="GO:0032391">
    <property type="term" value="C:photoreceptor connecting cilium"/>
    <property type="evidence" value="ECO:0000314"/>
    <property type="project" value="BHF-UCL"/>
</dbReference>
<dbReference type="GO" id="GO:0061629">
    <property type="term" value="F:RNA polymerase II-specific DNA-binding transcription factor binding"/>
    <property type="evidence" value="ECO:0000266"/>
    <property type="project" value="MGI"/>
</dbReference>
<dbReference type="GO" id="GO:0007411">
    <property type="term" value="P:axon guidance"/>
    <property type="evidence" value="ECO:0000316"/>
    <property type="project" value="MGI"/>
</dbReference>
<dbReference type="GO" id="GO:0060219">
    <property type="term" value="P:camera-type eye photoreceptor cell differentiation"/>
    <property type="evidence" value="ECO:0000315"/>
    <property type="project" value="MGI"/>
</dbReference>
<dbReference type="GO" id="GO:0060271">
    <property type="term" value="P:cilium assembly"/>
    <property type="evidence" value="ECO:0000315"/>
    <property type="project" value="FlyBase"/>
</dbReference>
<dbReference type="GO" id="GO:0048560">
    <property type="term" value="P:establishment of anatomical structure orientation"/>
    <property type="evidence" value="ECO:0007669"/>
    <property type="project" value="Ensembl"/>
</dbReference>
<dbReference type="GO" id="GO:0045198">
    <property type="term" value="P:establishment of epithelial cell apical/basal polarity"/>
    <property type="evidence" value="ECO:0000315"/>
    <property type="project" value="MGI"/>
</dbReference>
<dbReference type="GO" id="GO:0001736">
    <property type="term" value="P:establishment of planar polarity"/>
    <property type="evidence" value="ECO:0000315"/>
    <property type="project" value="MGI"/>
</dbReference>
<dbReference type="GO" id="GO:0045444">
    <property type="term" value="P:fat cell differentiation"/>
    <property type="evidence" value="ECO:0000270"/>
    <property type="project" value="BHF-UCL"/>
</dbReference>
<dbReference type="GO" id="GO:0060122">
    <property type="term" value="P:inner ear receptor cell stereocilium organization"/>
    <property type="evidence" value="ECO:0000315"/>
    <property type="project" value="MGI"/>
</dbReference>
<dbReference type="GO" id="GO:1903251">
    <property type="term" value="P:multi-ciliated epithelial cell differentiation"/>
    <property type="evidence" value="ECO:0000315"/>
    <property type="project" value="MGI"/>
</dbReference>
<dbReference type="GO" id="GO:0035264">
    <property type="term" value="P:multicellular organism growth"/>
    <property type="evidence" value="ECO:0000315"/>
    <property type="project" value="MGI"/>
</dbReference>
<dbReference type="GO" id="GO:1905515">
    <property type="term" value="P:non-motile cilium assembly"/>
    <property type="evidence" value="ECO:0007669"/>
    <property type="project" value="InterPro"/>
</dbReference>
<dbReference type="GO" id="GO:0021772">
    <property type="term" value="P:olfactory bulb development"/>
    <property type="evidence" value="ECO:0000315"/>
    <property type="project" value="MGI"/>
</dbReference>
<dbReference type="GO" id="GO:0072659">
    <property type="term" value="P:protein localization to plasma membrane"/>
    <property type="evidence" value="ECO:0000315"/>
    <property type="project" value="MGI"/>
</dbReference>
<dbReference type="GO" id="GO:0015031">
    <property type="term" value="P:protein transport"/>
    <property type="evidence" value="ECO:0007669"/>
    <property type="project" value="UniProtKB-KW"/>
</dbReference>
<dbReference type="GO" id="GO:0032880">
    <property type="term" value="P:regulation of protein localization"/>
    <property type="evidence" value="ECO:0000315"/>
    <property type="project" value="MGI"/>
</dbReference>
<dbReference type="GO" id="GO:0051492">
    <property type="term" value="P:regulation of stress fiber assembly"/>
    <property type="evidence" value="ECO:0000315"/>
    <property type="project" value="MGI"/>
</dbReference>
<dbReference type="GO" id="GO:0061326">
    <property type="term" value="P:renal tubule development"/>
    <property type="evidence" value="ECO:0000315"/>
    <property type="project" value="MGI"/>
</dbReference>
<dbReference type="GO" id="GO:0007608">
    <property type="term" value="P:sensory perception of smell"/>
    <property type="evidence" value="ECO:0000315"/>
    <property type="project" value="MGI"/>
</dbReference>
<dbReference type="CDD" id="cd21341">
    <property type="entry name" value="TTC8_N"/>
    <property type="match status" value="1"/>
</dbReference>
<dbReference type="FunFam" id="1.25.40.10:FF:000120">
    <property type="entry name" value="Tetratricopeptide repeat domain 8"/>
    <property type="match status" value="1"/>
</dbReference>
<dbReference type="FunFam" id="1.25.40.10:FF:000121">
    <property type="entry name" value="Tetratricopeptide repeat domain 8"/>
    <property type="match status" value="1"/>
</dbReference>
<dbReference type="FunFam" id="1.25.40.10:FF:000173">
    <property type="entry name" value="Tetratricopeptide repeat domain 8"/>
    <property type="match status" value="1"/>
</dbReference>
<dbReference type="Gene3D" id="1.25.40.10">
    <property type="entry name" value="Tetratricopeptide repeat domain"/>
    <property type="match status" value="2"/>
</dbReference>
<dbReference type="InterPro" id="IPR028796">
    <property type="entry name" value="BBS8"/>
</dbReference>
<dbReference type="InterPro" id="IPR011990">
    <property type="entry name" value="TPR-like_helical_dom_sf"/>
</dbReference>
<dbReference type="InterPro" id="IPR019734">
    <property type="entry name" value="TPR_rpt"/>
</dbReference>
<dbReference type="PANTHER" id="PTHR44177">
    <property type="entry name" value="TETRATRICOPEPTIDE REPEAT PROTEIN 8"/>
    <property type="match status" value="1"/>
</dbReference>
<dbReference type="PANTHER" id="PTHR44177:SF1">
    <property type="entry name" value="TETRATRICOPEPTIDE REPEAT PROTEIN 8"/>
    <property type="match status" value="1"/>
</dbReference>
<dbReference type="Pfam" id="PF13432">
    <property type="entry name" value="TPR_16"/>
    <property type="match status" value="1"/>
</dbReference>
<dbReference type="Pfam" id="PF13181">
    <property type="entry name" value="TPR_8"/>
    <property type="match status" value="1"/>
</dbReference>
<dbReference type="SMART" id="SM00028">
    <property type="entry name" value="TPR"/>
    <property type="match status" value="7"/>
</dbReference>
<dbReference type="SUPFAM" id="SSF48452">
    <property type="entry name" value="TPR-like"/>
    <property type="match status" value="1"/>
</dbReference>
<dbReference type="PROSITE" id="PS50005">
    <property type="entry name" value="TPR"/>
    <property type="match status" value="6"/>
</dbReference>
<dbReference type="PROSITE" id="PS50293">
    <property type="entry name" value="TPR_REGION"/>
    <property type="match status" value="2"/>
</dbReference>
<protein>
    <recommendedName>
        <fullName>Tetratricopeptide repeat protein 8</fullName>
        <shortName>TPR repeat protein 8</shortName>
    </recommendedName>
    <alternativeName>
        <fullName>Bardet-Biedl syndrome 8 protein homolog</fullName>
    </alternativeName>
</protein>
<accession>Q8VD72</accession>
<accession>Q9DCP7</accession>
<name>TTC8_MOUSE</name>
<organism>
    <name type="scientific">Mus musculus</name>
    <name type="common">Mouse</name>
    <dbReference type="NCBI Taxonomy" id="10090"/>
    <lineage>
        <taxon>Eukaryota</taxon>
        <taxon>Metazoa</taxon>
        <taxon>Chordata</taxon>
        <taxon>Craniata</taxon>
        <taxon>Vertebrata</taxon>
        <taxon>Euteleostomi</taxon>
        <taxon>Mammalia</taxon>
        <taxon>Eutheria</taxon>
        <taxon>Euarchontoglires</taxon>
        <taxon>Glires</taxon>
        <taxon>Rodentia</taxon>
        <taxon>Myomorpha</taxon>
        <taxon>Muroidea</taxon>
        <taxon>Muridae</taxon>
        <taxon>Murinae</taxon>
        <taxon>Mus</taxon>
        <taxon>Mus</taxon>
    </lineage>
</organism>
<reference key="1">
    <citation type="journal article" date="2005" name="Science">
        <title>The transcriptional landscape of the mammalian genome.</title>
        <authorList>
            <person name="Carninci P."/>
            <person name="Kasukawa T."/>
            <person name="Katayama S."/>
            <person name="Gough J."/>
            <person name="Frith M.C."/>
            <person name="Maeda N."/>
            <person name="Oyama R."/>
            <person name="Ravasi T."/>
            <person name="Lenhard B."/>
            <person name="Wells C."/>
            <person name="Kodzius R."/>
            <person name="Shimokawa K."/>
            <person name="Bajic V.B."/>
            <person name="Brenner S.E."/>
            <person name="Batalov S."/>
            <person name="Forrest A.R."/>
            <person name="Zavolan M."/>
            <person name="Davis M.J."/>
            <person name="Wilming L.G."/>
            <person name="Aidinis V."/>
            <person name="Allen J.E."/>
            <person name="Ambesi-Impiombato A."/>
            <person name="Apweiler R."/>
            <person name="Aturaliya R.N."/>
            <person name="Bailey T.L."/>
            <person name="Bansal M."/>
            <person name="Baxter L."/>
            <person name="Beisel K.W."/>
            <person name="Bersano T."/>
            <person name="Bono H."/>
            <person name="Chalk A.M."/>
            <person name="Chiu K.P."/>
            <person name="Choudhary V."/>
            <person name="Christoffels A."/>
            <person name="Clutterbuck D.R."/>
            <person name="Crowe M.L."/>
            <person name="Dalla E."/>
            <person name="Dalrymple B.P."/>
            <person name="de Bono B."/>
            <person name="Della Gatta G."/>
            <person name="di Bernardo D."/>
            <person name="Down T."/>
            <person name="Engstrom P."/>
            <person name="Fagiolini M."/>
            <person name="Faulkner G."/>
            <person name="Fletcher C.F."/>
            <person name="Fukushima T."/>
            <person name="Furuno M."/>
            <person name="Futaki S."/>
            <person name="Gariboldi M."/>
            <person name="Georgii-Hemming P."/>
            <person name="Gingeras T.R."/>
            <person name="Gojobori T."/>
            <person name="Green R.E."/>
            <person name="Gustincich S."/>
            <person name="Harbers M."/>
            <person name="Hayashi Y."/>
            <person name="Hensch T.K."/>
            <person name="Hirokawa N."/>
            <person name="Hill D."/>
            <person name="Huminiecki L."/>
            <person name="Iacono M."/>
            <person name="Ikeo K."/>
            <person name="Iwama A."/>
            <person name="Ishikawa T."/>
            <person name="Jakt M."/>
            <person name="Kanapin A."/>
            <person name="Katoh M."/>
            <person name="Kawasawa Y."/>
            <person name="Kelso J."/>
            <person name="Kitamura H."/>
            <person name="Kitano H."/>
            <person name="Kollias G."/>
            <person name="Krishnan S.P."/>
            <person name="Kruger A."/>
            <person name="Kummerfeld S.K."/>
            <person name="Kurochkin I.V."/>
            <person name="Lareau L.F."/>
            <person name="Lazarevic D."/>
            <person name="Lipovich L."/>
            <person name="Liu J."/>
            <person name="Liuni S."/>
            <person name="McWilliam S."/>
            <person name="Madan Babu M."/>
            <person name="Madera M."/>
            <person name="Marchionni L."/>
            <person name="Matsuda H."/>
            <person name="Matsuzawa S."/>
            <person name="Miki H."/>
            <person name="Mignone F."/>
            <person name="Miyake S."/>
            <person name="Morris K."/>
            <person name="Mottagui-Tabar S."/>
            <person name="Mulder N."/>
            <person name="Nakano N."/>
            <person name="Nakauchi H."/>
            <person name="Ng P."/>
            <person name="Nilsson R."/>
            <person name="Nishiguchi S."/>
            <person name="Nishikawa S."/>
            <person name="Nori F."/>
            <person name="Ohara O."/>
            <person name="Okazaki Y."/>
            <person name="Orlando V."/>
            <person name="Pang K.C."/>
            <person name="Pavan W.J."/>
            <person name="Pavesi G."/>
            <person name="Pesole G."/>
            <person name="Petrovsky N."/>
            <person name="Piazza S."/>
            <person name="Reed J."/>
            <person name="Reid J.F."/>
            <person name="Ring B.Z."/>
            <person name="Ringwald M."/>
            <person name="Rost B."/>
            <person name="Ruan Y."/>
            <person name="Salzberg S.L."/>
            <person name="Sandelin A."/>
            <person name="Schneider C."/>
            <person name="Schoenbach C."/>
            <person name="Sekiguchi K."/>
            <person name="Semple C.A."/>
            <person name="Seno S."/>
            <person name="Sessa L."/>
            <person name="Sheng Y."/>
            <person name="Shibata Y."/>
            <person name="Shimada H."/>
            <person name="Shimada K."/>
            <person name="Silva D."/>
            <person name="Sinclair B."/>
            <person name="Sperling S."/>
            <person name="Stupka E."/>
            <person name="Sugiura K."/>
            <person name="Sultana R."/>
            <person name="Takenaka Y."/>
            <person name="Taki K."/>
            <person name="Tammoja K."/>
            <person name="Tan S.L."/>
            <person name="Tang S."/>
            <person name="Taylor M.S."/>
            <person name="Tegner J."/>
            <person name="Teichmann S.A."/>
            <person name="Ueda H.R."/>
            <person name="van Nimwegen E."/>
            <person name="Verardo R."/>
            <person name="Wei C.L."/>
            <person name="Yagi K."/>
            <person name="Yamanishi H."/>
            <person name="Zabarovsky E."/>
            <person name="Zhu S."/>
            <person name="Zimmer A."/>
            <person name="Hide W."/>
            <person name="Bult C."/>
            <person name="Grimmond S.M."/>
            <person name="Teasdale R.D."/>
            <person name="Liu E.T."/>
            <person name="Brusic V."/>
            <person name="Quackenbush J."/>
            <person name="Wahlestedt C."/>
            <person name="Mattick J.S."/>
            <person name="Hume D.A."/>
            <person name="Kai C."/>
            <person name="Sasaki D."/>
            <person name="Tomaru Y."/>
            <person name="Fukuda S."/>
            <person name="Kanamori-Katayama M."/>
            <person name="Suzuki M."/>
            <person name="Aoki J."/>
            <person name="Arakawa T."/>
            <person name="Iida J."/>
            <person name="Imamura K."/>
            <person name="Itoh M."/>
            <person name="Kato T."/>
            <person name="Kawaji H."/>
            <person name="Kawagashira N."/>
            <person name="Kawashima T."/>
            <person name="Kojima M."/>
            <person name="Kondo S."/>
            <person name="Konno H."/>
            <person name="Nakano K."/>
            <person name="Ninomiya N."/>
            <person name="Nishio T."/>
            <person name="Okada M."/>
            <person name="Plessy C."/>
            <person name="Shibata K."/>
            <person name="Shiraki T."/>
            <person name="Suzuki S."/>
            <person name="Tagami M."/>
            <person name="Waki K."/>
            <person name="Watahiki A."/>
            <person name="Okamura-Oho Y."/>
            <person name="Suzuki H."/>
            <person name="Kawai J."/>
            <person name="Hayashizaki Y."/>
        </authorList>
    </citation>
    <scope>NUCLEOTIDE SEQUENCE [LARGE SCALE MRNA] (ISOFORM 2)</scope>
    <source>
        <strain>C57BL/6J</strain>
        <tissue>Head</tissue>
        <tissue>Kidney</tissue>
    </source>
</reference>
<reference key="2">
    <citation type="journal article" date="2004" name="Genome Res.">
        <title>The status, quality, and expansion of the NIH full-length cDNA project: the Mammalian Gene Collection (MGC).</title>
        <authorList>
            <consortium name="The MGC Project Team"/>
        </authorList>
    </citation>
    <scope>NUCLEOTIDE SEQUENCE [LARGE SCALE MRNA] (ISOFORM 1)</scope>
    <source>
        <strain>C57BL/6J</strain>
        <tissue>Retina</tissue>
    </source>
</reference>
<reference key="3">
    <citation type="journal article" date="2003" name="Nature">
        <title>Basal body dysfunction is a likely cause of pleiotropic Bardet-Biedl syndrome.</title>
        <authorList>
            <person name="Ansley S.J."/>
            <person name="Badano J.L."/>
            <person name="Blacque O.E."/>
            <person name="Hill J."/>
            <person name="Hoskins B.E."/>
            <person name="Leitch C.C."/>
            <person name="Kim J.C."/>
            <person name="Ross A.J."/>
            <person name="Eichers E.R."/>
            <person name="Teslovich T.M."/>
            <person name="Mah A.K."/>
            <person name="Johnsen R.C."/>
            <person name="Cavender J.C."/>
            <person name="Lewis R.A."/>
            <person name="Leroux M.R."/>
            <person name="Beales P.L."/>
            <person name="Katsanis N."/>
        </authorList>
    </citation>
    <scope>DEVELOPMENTAL STAGE</scope>
</reference>
<reference key="4">
    <citation type="journal article" date="2011" name="PLoS Genet.">
        <title>A novel protein LZTFL1 regulates ciliary trafficking of the BBSome and Smoothened.</title>
        <authorList>
            <person name="Seo S."/>
            <person name="Zhang Q."/>
            <person name="Bugge K."/>
            <person name="Breslow D.K."/>
            <person name="Searby C.C."/>
            <person name="Nachury M.V."/>
            <person name="Sheffield V.C."/>
        </authorList>
    </citation>
    <scope>IDENTIFICATION IN THE BBSOME COMPLEX</scope>
</reference>
<reference key="5">
    <citation type="journal article" date="2010" name="Am. J. Hum. Genet.">
        <title>A splice-site mutation in a retina-specific exon of BBS8 causes nonsyndromic retinitis pigmentosa.</title>
        <authorList>
            <person name="Riazuddin S.A."/>
            <person name="Iqbal M."/>
            <person name="Wang Y."/>
            <person name="Masuda T."/>
            <person name="Chen Y."/>
            <person name="Bowne S."/>
            <person name="Sullivan L.S."/>
            <person name="Waseem N.H."/>
            <person name="Bhattacharya S."/>
            <person name="Daiger S.P."/>
            <person name="Zhang K."/>
            <person name="Khan S.N."/>
            <person name="Riazuddin S."/>
            <person name="Hejtmancik J.F."/>
            <person name="Sieving P.A."/>
            <person name="Zack D.J."/>
            <person name="Katsanis N."/>
        </authorList>
    </citation>
    <scope>IDENTIFICATION OF ISOFORM 2</scope>
    <scope>TISSUE SPECIFICITY</scope>
</reference>
<reference key="6">
    <citation type="journal article" date="2014" name="PLoS ONE">
        <title>Regulation of cilium length and intraflagellar transport by the RCK-kinases ICK and MOK in renal epithelial cells.</title>
        <authorList>
            <person name="Broekhuis J.R."/>
            <person name="Verhey K.J."/>
            <person name="Jansen G."/>
        </authorList>
    </citation>
    <scope>SUBCELLULAR LOCATION</scope>
</reference>
<comment type="function">
    <text evidence="1">The BBSome complex is thought to function as a coat complex required for sorting of specific membrane proteins to the primary cilia. The BBSome complex is required for ciliogenesis but is dispensable for centriolar satellite function. This ciliogenic function is mediated in part by the Rab8 GDP/GTP exchange factor, which localizes to the basal body and contacts the BBSome. Rab8(GTP) enters the primary cilium and promotes extension of the ciliary membrane. Firstly the BBSome associates with the ciliary membrane and binds to RAB3IP/Rabin8, the guanosyl exchange factor (GEF) for Rab8 and then the Rab8-GTP localizes to the cilium and promotes docking and fusion of carrier vesicles to the base of the ciliary membrane. The BBSome complex, together with the LTZL1, controls SMO ciliary trafficking and contributes to the sonic hedgehog (SHH) pathway regulation. Required for proper BBSome complex assembly and its ciliary localization (By similarity).</text>
</comment>
<comment type="subunit">
    <text evidence="2 6">Part of BBSome complex, that contains BBS1, BBS2, BBS4, BBS5, BBS7, BBS8/TTC8, BBS9 and BBIP10. Interacts with PCM1. Interacts with CCDC28B. Interacts with PKD1.</text>
</comment>
<comment type="subcellular location">
    <subcellularLocation>
        <location evidence="2">Cytoplasm</location>
        <location evidence="2">Cytoskeleton</location>
        <location evidence="2">Microtubule organizing center</location>
        <location evidence="2">Centrosome</location>
        <location evidence="2">Centriole</location>
    </subcellularLocation>
    <subcellularLocation>
        <location evidence="2">Cell projection</location>
        <location evidence="2">Cilium membrane</location>
    </subcellularLocation>
    <subcellularLocation>
        <location evidence="2">Cytoplasm</location>
    </subcellularLocation>
    <subcellularLocation>
        <location evidence="2">Cytoplasm</location>
        <location evidence="2">Cytoskeleton</location>
        <location evidence="2">Microtubule organizing center</location>
        <location evidence="2">Centrosome</location>
        <location evidence="2">Centriolar satellite</location>
    </subcellularLocation>
    <subcellularLocation>
        <location evidence="7">Cell projection</location>
        <location evidence="7">Cilium</location>
    </subcellularLocation>
</comment>
<comment type="alternative products">
    <event type="alternative splicing"/>
    <isoform>
        <id>Q8VD72-1</id>
        <name>1</name>
        <sequence type="displayed"/>
    </isoform>
    <isoform>
        <id>Q8VD72-2</id>
        <name>2</name>
        <sequence type="described" ref="VSP_007825"/>
    </isoform>
</comment>
<comment type="tissue specificity">
    <text evidence="5">Isoform 1 is retina-specific whereas isoform 2 is ubiquitously expressed.</text>
</comment>
<comment type="developmental stage">
    <text evidence="4">Expressed at 12 dpc in ciliated structures, including maturing (stages X and XI) spermatids, the connecting cilium of the retina and bronchial epithelial cells. At 14 and 16 dpc, detected in the telencephalon, with prominent expression at the developing ependymal cell layer and the olfactory epithelium.</text>
</comment>
<proteinExistence type="evidence at protein level"/>
<feature type="chain" id="PRO_0000106389" description="Tetratricopeptide repeat protein 8">
    <location>
        <begin position="1"/>
        <end position="515"/>
    </location>
</feature>
<feature type="repeat" description="TPR 1">
    <location>
        <begin position="4"/>
        <end position="37"/>
    </location>
</feature>
<feature type="repeat" description="TPR 2">
    <location>
        <begin position="225"/>
        <end position="258"/>
    </location>
</feature>
<feature type="repeat" description="TPR 3">
    <location>
        <begin position="259"/>
        <end position="291"/>
    </location>
</feature>
<feature type="repeat" description="TPR 4">
    <location>
        <begin position="292"/>
        <end position="325"/>
    </location>
</feature>
<feature type="repeat" description="TPR 5">
    <location>
        <begin position="326"/>
        <end position="359"/>
    </location>
</feature>
<feature type="repeat" description="TPR 6">
    <location>
        <begin position="360"/>
        <end position="393"/>
    </location>
</feature>
<feature type="repeat" description="TPR 7">
    <location>
        <begin position="397"/>
        <end position="430"/>
    </location>
</feature>
<feature type="repeat" description="TPR 8">
    <location>
        <begin position="432"/>
        <end position="464"/>
    </location>
</feature>
<feature type="region of interest" description="Disordered" evidence="3">
    <location>
        <begin position="89"/>
        <end position="109"/>
    </location>
</feature>
<feature type="region of interest" description="Disordered" evidence="3">
    <location>
        <begin position="118"/>
        <end position="137"/>
    </location>
</feature>
<feature type="splice variant" id="VSP_007825" description="In isoform 2." evidence="8">
    <location>
        <begin position="38"/>
        <end position="47"/>
    </location>
</feature>
<evidence type="ECO:0000250" key="1"/>
<evidence type="ECO:0000250" key="2">
    <source>
        <dbReference type="UniProtKB" id="Q8TAM2"/>
    </source>
</evidence>
<evidence type="ECO:0000256" key="3">
    <source>
        <dbReference type="SAM" id="MobiDB-lite"/>
    </source>
</evidence>
<evidence type="ECO:0000269" key="4">
    <source>
    </source>
</evidence>
<evidence type="ECO:0000269" key="5">
    <source>
    </source>
</evidence>
<evidence type="ECO:0000269" key="6">
    <source>
    </source>
</evidence>
<evidence type="ECO:0000269" key="7">
    <source>
    </source>
</evidence>
<evidence type="ECO:0000303" key="8">
    <source>
    </source>
</evidence>
<keyword id="KW-0025">Alternative splicing</keyword>
<keyword id="KW-1003">Cell membrane</keyword>
<keyword id="KW-0966">Cell projection</keyword>
<keyword id="KW-0969">Cilium</keyword>
<keyword id="KW-0970">Cilium biogenesis/degradation</keyword>
<keyword id="KW-0963">Cytoplasm</keyword>
<keyword id="KW-0206">Cytoskeleton</keyword>
<keyword id="KW-0472">Membrane</keyword>
<keyword id="KW-0653">Protein transport</keyword>
<keyword id="KW-1185">Reference proteome</keyword>
<keyword id="KW-0677">Repeat</keyword>
<keyword id="KW-0802">TPR repeat</keyword>
<keyword id="KW-0813">Transport</keyword>